<proteinExistence type="inferred from homology"/>
<geneLocation type="chloroplast"/>
<organism>
    <name type="scientific">Barbarea verna</name>
    <name type="common">Land cress</name>
    <name type="synonym">Erysimum vernum</name>
    <dbReference type="NCBI Taxonomy" id="50458"/>
    <lineage>
        <taxon>Eukaryota</taxon>
        <taxon>Viridiplantae</taxon>
        <taxon>Streptophyta</taxon>
        <taxon>Embryophyta</taxon>
        <taxon>Tracheophyta</taxon>
        <taxon>Spermatophyta</taxon>
        <taxon>Magnoliopsida</taxon>
        <taxon>eudicotyledons</taxon>
        <taxon>Gunneridae</taxon>
        <taxon>Pentapetalae</taxon>
        <taxon>rosids</taxon>
        <taxon>malvids</taxon>
        <taxon>Brassicales</taxon>
        <taxon>Brassicaceae</taxon>
        <taxon>Cardamineae</taxon>
        <taxon>Barbarea</taxon>
    </lineage>
</organism>
<protein>
    <recommendedName>
        <fullName evidence="1">Potassium/proton antiporter CemA</fullName>
    </recommendedName>
    <alternativeName>
        <fullName evidence="1">Chloroplast envelope membrane protein A</fullName>
        <shortName evidence="1">CemA</shortName>
    </alternativeName>
</protein>
<feature type="chain" id="PRO_0000293512" description="Potassium/proton antiporter CemA">
    <location>
        <begin position="1"/>
        <end position="229"/>
    </location>
</feature>
<feature type="transmembrane region" description="Helical" evidence="1">
    <location>
        <begin position="6"/>
        <end position="26"/>
    </location>
</feature>
<feature type="transmembrane region" description="Helical" evidence="1">
    <location>
        <begin position="107"/>
        <end position="127"/>
    </location>
</feature>
<feature type="transmembrane region" description="Helical" evidence="1">
    <location>
        <begin position="189"/>
        <end position="209"/>
    </location>
</feature>
<evidence type="ECO:0000255" key="1">
    <source>
        <dbReference type="HAMAP-Rule" id="MF_01308"/>
    </source>
</evidence>
<evidence type="ECO:0000305" key="2"/>
<keyword id="KW-0050">Antiport</keyword>
<keyword id="KW-0150">Chloroplast</keyword>
<keyword id="KW-0375">Hydrogen ion transport</keyword>
<keyword id="KW-0406">Ion transport</keyword>
<keyword id="KW-0472">Membrane</keyword>
<keyword id="KW-0934">Plastid</keyword>
<keyword id="KW-1001">Plastid inner membrane</keyword>
<keyword id="KW-0630">Potassium</keyword>
<keyword id="KW-0633">Potassium transport</keyword>
<keyword id="KW-0812">Transmembrane</keyword>
<keyword id="KW-1133">Transmembrane helix</keyword>
<keyword id="KW-0813">Transport</keyword>
<sequence>MAKKKAFIPFFYFTSIVFLPWLISLCCNKSLKTWITTWWNTRQCETFLNDIQEKSVLEKFIQLEDLFQLDEMIKEYPETDLQQFRLGIHKETIQFIKIHNEYRIHTILHFSTNLISFVILSGYSFWGKEKLFILNSWVQEFLYNLSDTIKAFSILLLTDLCIGFHSPHGWELMIGYIYKDFGFAHYEQILSGLVSTFPVILDTIFKYWIFRYLNRISPSLVVIYHAIND</sequence>
<name>CEMA_BARVE</name>
<dbReference type="EMBL" id="AP009370">
    <property type="protein sequence ID" value="BAF50122.1"/>
    <property type="molecule type" value="Genomic_DNA"/>
</dbReference>
<dbReference type="RefSeq" id="YP_001123298.1">
    <property type="nucleotide sequence ID" value="NC_009269.1"/>
</dbReference>
<dbReference type="SMR" id="A4QKB7"/>
<dbReference type="GeneID" id="4961879"/>
<dbReference type="GO" id="GO:0009706">
    <property type="term" value="C:chloroplast inner membrane"/>
    <property type="evidence" value="ECO:0007669"/>
    <property type="project" value="UniProtKB-SubCell"/>
</dbReference>
<dbReference type="GO" id="GO:0015297">
    <property type="term" value="F:antiporter activity"/>
    <property type="evidence" value="ECO:0007669"/>
    <property type="project" value="UniProtKB-KW"/>
</dbReference>
<dbReference type="GO" id="GO:0015078">
    <property type="term" value="F:proton transmembrane transporter activity"/>
    <property type="evidence" value="ECO:0007669"/>
    <property type="project" value="UniProtKB-UniRule"/>
</dbReference>
<dbReference type="GO" id="GO:0006813">
    <property type="term" value="P:potassium ion transport"/>
    <property type="evidence" value="ECO:0007669"/>
    <property type="project" value="UniProtKB-UniRule"/>
</dbReference>
<dbReference type="HAMAP" id="MF_01308">
    <property type="entry name" value="CemA_PxcA"/>
    <property type="match status" value="1"/>
</dbReference>
<dbReference type="InterPro" id="IPR004282">
    <property type="entry name" value="CemA"/>
</dbReference>
<dbReference type="PANTHER" id="PTHR33650:SF2">
    <property type="entry name" value="CHLOROPLAST ENVELOPE MEMBRANE PROTEIN"/>
    <property type="match status" value="1"/>
</dbReference>
<dbReference type="PANTHER" id="PTHR33650">
    <property type="entry name" value="CHLOROPLAST ENVELOPE MEMBRANE PROTEIN-RELATED"/>
    <property type="match status" value="1"/>
</dbReference>
<dbReference type="Pfam" id="PF03040">
    <property type="entry name" value="CemA"/>
    <property type="match status" value="1"/>
</dbReference>
<gene>
    <name evidence="1" type="primary">cemA</name>
    <name type="synonym">ycf10</name>
</gene>
<reference key="1">
    <citation type="submission" date="2007-03" db="EMBL/GenBank/DDBJ databases">
        <title>Sequencing analysis of Barbarea verna chloroplast DNA.</title>
        <authorList>
            <person name="Hosouchi T."/>
            <person name="Tsuruoka H."/>
            <person name="Kotani H."/>
        </authorList>
    </citation>
    <scope>NUCLEOTIDE SEQUENCE [LARGE SCALE GENOMIC DNA]</scope>
</reference>
<accession>A4QKB7</accession>
<comment type="function">
    <text evidence="1">Contributes to K(+)/H(+) antiport activity by supporting proton efflux to control proton extrusion and homeostasis in chloroplasts in a light-dependent manner to modulate photosynthesis. Prevents excessive induction of non-photochemical quenching (NPQ) under continuous-light conditions. Indirectly promotes efficient inorganic carbon uptake into chloroplasts.</text>
</comment>
<comment type="catalytic activity">
    <reaction evidence="1">
        <text>K(+)(in) + H(+)(out) = K(+)(out) + H(+)(in)</text>
        <dbReference type="Rhea" id="RHEA:29467"/>
        <dbReference type="ChEBI" id="CHEBI:15378"/>
        <dbReference type="ChEBI" id="CHEBI:29103"/>
    </reaction>
</comment>
<comment type="subcellular location">
    <subcellularLocation>
        <location evidence="1">Plastid</location>
        <location evidence="1">Chloroplast inner membrane</location>
        <topology evidence="1">Multi-pass membrane protein</topology>
    </subcellularLocation>
</comment>
<comment type="similarity">
    <text evidence="1 2">Belongs to the CemA family.</text>
</comment>